<name>DBF4A_XENTR</name>
<dbReference type="EMBL" id="CR761670">
    <property type="protein sequence ID" value="CAJ83752.1"/>
    <property type="molecule type" value="mRNA"/>
</dbReference>
<dbReference type="RefSeq" id="NP_001037970.1">
    <property type="nucleotide sequence ID" value="NM_001044505.1"/>
</dbReference>
<dbReference type="SMR" id="Q28FY7"/>
<dbReference type="FunCoup" id="Q28FY7">
    <property type="interactions" value="1703"/>
</dbReference>
<dbReference type="STRING" id="8364.ENSXETP00000033437"/>
<dbReference type="PaxDb" id="8364-ENSXETP00000005307"/>
<dbReference type="GeneID" id="733748"/>
<dbReference type="KEGG" id="xtr:733748"/>
<dbReference type="AGR" id="Xenbase:XB-GENE-972991"/>
<dbReference type="CTD" id="10926"/>
<dbReference type="Xenbase" id="XB-GENE-972991">
    <property type="gene designation" value="dbf4"/>
</dbReference>
<dbReference type="eggNOG" id="KOG4139">
    <property type="taxonomic scope" value="Eukaryota"/>
</dbReference>
<dbReference type="HOGENOM" id="CLU_030726_2_0_1"/>
<dbReference type="InParanoid" id="Q28FY7"/>
<dbReference type="OMA" id="KKEAKCV"/>
<dbReference type="OrthoDB" id="21380at2759"/>
<dbReference type="PhylomeDB" id="Q28FY7"/>
<dbReference type="Reactome" id="R-XTR-68962">
    <property type="pathway name" value="Activation of the pre-replicative complex"/>
</dbReference>
<dbReference type="Proteomes" id="UP000008143">
    <property type="component" value="Chromosome 6"/>
</dbReference>
<dbReference type="Bgee" id="ENSXETG00000002490">
    <property type="expression patterns" value="Expressed in ovary and 12 other cell types or tissues"/>
</dbReference>
<dbReference type="ExpressionAtlas" id="Q28FY7">
    <property type="expression patterns" value="differential"/>
</dbReference>
<dbReference type="GO" id="GO:0005634">
    <property type="term" value="C:nucleus"/>
    <property type="evidence" value="ECO:0007669"/>
    <property type="project" value="UniProtKB-SubCell"/>
</dbReference>
<dbReference type="GO" id="GO:0003676">
    <property type="term" value="F:nucleic acid binding"/>
    <property type="evidence" value="ECO:0007669"/>
    <property type="project" value="InterPro"/>
</dbReference>
<dbReference type="GO" id="GO:0008270">
    <property type="term" value="F:zinc ion binding"/>
    <property type="evidence" value="ECO:0007669"/>
    <property type="project" value="UniProtKB-KW"/>
</dbReference>
<dbReference type="FunFam" id="6.10.250.3410:FF:000001">
    <property type="entry name" value="Protein DBF4 homolog A"/>
    <property type="match status" value="1"/>
</dbReference>
<dbReference type="Gene3D" id="2.10.50.40">
    <property type="match status" value="1"/>
</dbReference>
<dbReference type="Gene3D" id="6.10.250.3410">
    <property type="entry name" value="DBF zinc finger"/>
    <property type="match status" value="1"/>
</dbReference>
<dbReference type="InterPro" id="IPR001357">
    <property type="entry name" value="BRCT_dom"/>
</dbReference>
<dbReference type="InterPro" id="IPR036420">
    <property type="entry name" value="BRCT_dom_sf"/>
</dbReference>
<dbReference type="InterPro" id="IPR051590">
    <property type="entry name" value="Replication_Regulatory_Kinase"/>
</dbReference>
<dbReference type="InterPro" id="IPR006572">
    <property type="entry name" value="Znf_DBF"/>
</dbReference>
<dbReference type="InterPro" id="IPR038545">
    <property type="entry name" value="Znf_DBF_sf"/>
</dbReference>
<dbReference type="PANTHER" id="PTHR15375">
    <property type="entry name" value="ACTIVATOR OF S-PHASE KINASE-RELATED"/>
    <property type="match status" value="1"/>
</dbReference>
<dbReference type="PANTHER" id="PTHR15375:SF22">
    <property type="entry name" value="PROTEIN DBF4 HOMOLOG A"/>
    <property type="match status" value="1"/>
</dbReference>
<dbReference type="Pfam" id="PF00533">
    <property type="entry name" value="BRCT"/>
    <property type="match status" value="1"/>
</dbReference>
<dbReference type="Pfam" id="PF07535">
    <property type="entry name" value="zf-DBF"/>
    <property type="match status" value="1"/>
</dbReference>
<dbReference type="SMART" id="SM00586">
    <property type="entry name" value="ZnF_DBF"/>
    <property type="match status" value="1"/>
</dbReference>
<dbReference type="SUPFAM" id="SSF52113">
    <property type="entry name" value="BRCT domain"/>
    <property type="match status" value="1"/>
</dbReference>
<dbReference type="PROSITE" id="PS50172">
    <property type="entry name" value="BRCT"/>
    <property type="match status" value="1"/>
</dbReference>
<dbReference type="PROSITE" id="PS51265">
    <property type="entry name" value="ZF_DBF4"/>
    <property type="match status" value="1"/>
</dbReference>
<keyword id="KW-0131">Cell cycle</keyword>
<keyword id="KW-0479">Metal-binding</keyword>
<keyword id="KW-0539">Nucleus</keyword>
<keyword id="KW-0597">Phosphoprotein</keyword>
<keyword id="KW-1185">Reference proteome</keyword>
<keyword id="KW-0677">Repeat</keyword>
<keyword id="KW-0862">Zinc</keyword>
<keyword id="KW-0863">Zinc-finger</keyword>
<feature type="chain" id="PRO_0000234063" description="Protein DBF4 homolog A">
    <location>
        <begin position="1"/>
        <end position="663"/>
    </location>
</feature>
<feature type="domain" description="BRCT 1" evidence="2">
    <location>
        <begin position="18"/>
        <end position="111"/>
    </location>
</feature>
<feature type="domain" description="BRCT 2" evidence="2">
    <location>
        <begin position="136"/>
        <end position="161"/>
    </location>
</feature>
<feature type="zinc finger region" description="DBF4-type" evidence="3">
    <location>
        <begin position="269"/>
        <end position="317"/>
    </location>
</feature>
<feature type="region of interest" description="Disordered" evidence="4">
    <location>
        <begin position="84"/>
        <end position="119"/>
    </location>
</feature>
<feature type="region of interest" description="Disordered" evidence="4">
    <location>
        <begin position="171"/>
        <end position="193"/>
    </location>
</feature>
<feature type="compositionally biased region" description="Polar residues" evidence="4">
    <location>
        <begin position="87"/>
        <end position="99"/>
    </location>
</feature>
<feature type="binding site" evidence="3">
    <location>
        <position position="276"/>
    </location>
    <ligand>
        <name>Zn(2+)</name>
        <dbReference type="ChEBI" id="CHEBI:29105"/>
    </ligand>
</feature>
<feature type="binding site" evidence="3">
    <location>
        <position position="279"/>
    </location>
    <ligand>
        <name>Zn(2+)</name>
        <dbReference type="ChEBI" id="CHEBI:29105"/>
    </ligand>
</feature>
<feature type="binding site" evidence="3">
    <location>
        <position position="289"/>
    </location>
    <ligand>
        <name>Zn(2+)</name>
        <dbReference type="ChEBI" id="CHEBI:29105"/>
    </ligand>
</feature>
<feature type="binding site" evidence="3">
    <location>
        <position position="295"/>
    </location>
    <ligand>
        <name>Zn(2+)</name>
        <dbReference type="ChEBI" id="CHEBI:29105"/>
    </ligand>
</feature>
<proteinExistence type="evidence at transcript level"/>
<evidence type="ECO:0000250" key="1"/>
<evidence type="ECO:0000255" key="2">
    <source>
        <dbReference type="PROSITE-ProRule" id="PRU00033"/>
    </source>
</evidence>
<evidence type="ECO:0000255" key="3">
    <source>
        <dbReference type="PROSITE-ProRule" id="PRU00600"/>
    </source>
</evidence>
<evidence type="ECO:0000256" key="4">
    <source>
        <dbReference type="SAM" id="MobiDB-lite"/>
    </source>
</evidence>
<protein>
    <recommendedName>
        <fullName>Protein DBF4 homolog A</fullName>
    </recommendedName>
</protein>
<comment type="function">
    <text evidence="1">Regulatory subunit for cdc7 which activates its kinase activity thereby playing a central role in DNA replication and cell proliferation. Not required during the initiation of DNA replication in egg and during early embryonic development but is required later throughout development. The complex cdc7-dbf4a phosphorylates mcm2 subunit (By similarity).</text>
</comment>
<comment type="subunit">
    <text evidence="1">Forms a complex with cdc7.</text>
</comment>
<comment type="subcellular location">
    <subcellularLocation>
        <location evidence="1">Nucleus</location>
    </subcellularLocation>
</comment>
<comment type="PTM">
    <text evidence="1">Phosphorylated.</text>
</comment>
<gene>
    <name type="primary">dbf4</name>
    <name type="synonym">dbf4a</name>
    <name type="ORF">TGas125n02.1</name>
</gene>
<reference key="1">
    <citation type="submission" date="2006-03" db="EMBL/GenBank/DDBJ databases">
        <authorList>
            <consortium name="Sanger Xenopus tropicalis EST/cDNA project"/>
        </authorList>
    </citation>
    <scope>NUCLEOTIDE SEQUENCE [LARGE SCALE MRNA]</scope>
    <source>
        <tissue>Gastrula</tissue>
    </source>
</reference>
<sequence length="663" mass="73838">MKSTVATVKNPTGKVQADICKPFSGKVFYLDLTSKLISEKLEKDIKELGGTVEGFLSKEISYLITSKKEAKCVKTLKYVCSVPSPEPAQNTGESSTSPGNRRLPQEGNSSKKNEKSLVSRGKSLVKKAIKEQEILPKNSILSNALNWGVKILHVEEAKRYIEKKKSSLQQVKKSQPVVKSESKHPARRKVKPQKLKSPYIKVEDCSCQYRPLYLVLPQFRSFQNTTSNYLVEVDKKADVGQKLAETKQSINKTGHVQDGANNANIKLKEQKKHGYCECCLKKYDSLESHILSPQHKNYSESAYYQVVDDLISTFEFDFVDWSKYKNGRKSVGILMLTEKYKAEGQERNEASKANTFSERVSATTPLQENTLKDPYATSCSVPPTPVCNTDPMFSLPSPVGSAELCNKKYTTDNFEQLVATSVPALCLKDNLPGSLGEREMSVVYNETKQNETIDHTMERPKIGWDASNIPSNILLYVPQKVDAVAQYANVSLKGNIHCSKLTACQAALTYGKMDPAVCDNITFPKTVNHLHNKEGHRTMDQIYPTVQSDELQSLLPDYSPSGNLHRKLKTSAQTNLADDELLCRLSHKVSVPQQNDVLNVPSETLLAMFESSEDKTEFFGFAGSCVCDPCSMDDGDNRDQAHKNLLLSLFSHTTTSGSSFLGF</sequence>
<organism>
    <name type="scientific">Xenopus tropicalis</name>
    <name type="common">Western clawed frog</name>
    <name type="synonym">Silurana tropicalis</name>
    <dbReference type="NCBI Taxonomy" id="8364"/>
    <lineage>
        <taxon>Eukaryota</taxon>
        <taxon>Metazoa</taxon>
        <taxon>Chordata</taxon>
        <taxon>Craniata</taxon>
        <taxon>Vertebrata</taxon>
        <taxon>Euteleostomi</taxon>
        <taxon>Amphibia</taxon>
        <taxon>Batrachia</taxon>
        <taxon>Anura</taxon>
        <taxon>Pipoidea</taxon>
        <taxon>Pipidae</taxon>
        <taxon>Xenopodinae</taxon>
        <taxon>Xenopus</taxon>
        <taxon>Silurana</taxon>
    </lineage>
</organism>
<accession>Q28FY7</accession>